<name>RL25_BURP6</name>
<accession>A3N5K0</accession>
<protein>
    <recommendedName>
        <fullName evidence="1">Large ribosomal subunit protein bL25</fullName>
    </recommendedName>
    <alternativeName>
        <fullName evidence="2">50S ribosomal protein L25</fullName>
    </alternativeName>
    <alternativeName>
        <fullName evidence="1">General stress protein CTC</fullName>
    </alternativeName>
</protein>
<feature type="chain" id="PRO_1000052875" description="Large ribosomal subunit protein bL25">
    <location>
        <begin position="1"/>
        <end position="204"/>
    </location>
</feature>
<sequence>MKVVAFERQQQGTGASRRLRNAGKTTGIVYGGEVAPQMIELDHNALWHALKKEAFHSSILDLEVAGKSQRVLLRDVQYHPFRQLVLHVDFQRIDPKKKLHTKAPLHFLNAETSPAVKLSSAVVSHVVTEIEIECLPADLPEFLEVDLSKIEAGQSLHAKDIALPNGVALTAHVDAENPVIASATIPAGAVSDEAAAGEGETPAA</sequence>
<dbReference type="EMBL" id="CP000570">
    <property type="protein sequence ID" value="ABN82854.1"/>
    <property type="molecule type" value="Genomic_DNA"/>
</dbReference>
<dbReference type="RefSeq" id="WP_011851049.1">
    <property type="nucleotide sequence ID" value="NC_009074.1"/>
</dbReference>
<dbReference type="SMR" id="A3N5K0"/>
<dbReference type="KEGG" id="bpd:BURPS668_0568"/>
<dbReference type="HOGENOM" id="CLU_075939_0_1_4"/>
<dbReference type="GO" id="GO:0022625">
    <property type="term" value="C:cytosolic large ribosomal subunit"/>
    <property type="evidence" value="ECO:0007669"/>
    <property type="project" value="TreeGrafter"/>
</dbReference>
<dbReference type="GO" id="GO:0008097">
    <property type="term" value="F:5S rRNA binding"/>
    <property type="evidence" value="ECO:0007669"/>
    <property type="project" value="InterPro"/>
</dbReference>
<dbReference type="GO" id="GO:0003735">
    <property type="term" value="F:structural constituent of ribosome"/>
    <property type="evidence" value="ECO:0007669"/>
    <property type="project" value="InterPro"/>
</dbReference>
<dbReference type="GO" id="GO:0006412">
    <property type="term" value="P:translation"/>
    <property type="evidence" value="ECO:0007669"/>
    <property type="project" value="UniProtKB-UniRule"/>
</dbReference>
<dbReference type="CDD" id="cd00495">
    <property type="entry name" value="Ribosomal_L25_TL5_CTC"/>
    <property type="match status" value="1"/>
</dbReference>
<dbReference type="Gene3D" id="2.170.120.20">
    <property type="entry name" value="Ribosomal protein L25, beta domain"/>
    <property type="match status" value="1"/>
</dbReference>
<dbReference type="Gene3D" id="2.40.240.10">
    <property type="entry name" value="Ribosomal Protein L25, Chain P"/>
    <property type="match status" value="1"/>
</dbReference>
<dbReference type="HAMAP" id="MF_01334">
    <property type="entry name" value="Ribosomal_bL25_CTC"/>
    <property type="match status" value="1"/>
</dbReference>
<dbReference type="InterPro" id="IPR020056">
    <property type="entry name" value="Rbsml_bL25/Gln-tRNA_synth_N"/>
</dbReference>
<dbReference type="InterPro" id="IPR011035">
    <property type="entry name" value="Ribosomal_bL25/Gln-tRNA_synth"/>
</dbReference>
<dbReference type="InterPro" id="IPR020057">
    <property type="entry name" value="Ribosomal_bL25_b-dom"/>
</dbReference>
<dbReference type="InterPro" id="IPR037121">
    <property type="entry name" value="Ribosomal_bL25_C"/>
</dbReference>
<dbReference type="InterPro" id="IPR001021">
    <property type="entry name" value="Ribosomal_bL25_long"/>
</dbReference>
<dbReference type="InterPro" id="IPR029751">
    <property type="entry name" value="Ribosomal_L25_dom"/>
</dbReference>
<dbReference type="InterPro" id="IPR020930">
    <property type="entry name" value="Ribosomal_uL5_bac-type"/>
</dbReference>
<dbReference type="NCBIfam" id="TIGR00731">
    <property type="entry name" value="bL25_bact_ctc"/>
    <property type="match status" value="1"/>
</dbReference>
<dbReference type="NCBIfam" id="NF004130">
    <property type="entry name" value="PRK05618.1-5"/>
    <property type="match status" value="1"/>
</dbReference>
<dbReference type="NCBIfam" id="NF004612">
    <property type="entry name" value="PRK05943.1"/>
    <property type="match status" value="1"/>
</dbReference>
<dbReference type="PANTHER" id="PTHR33284">
    <property type="entry name" value="RIBOSOMAL PROTEIN L25/GLN-TRNA SYNTHETASE, ANTI-CODON-BINDING DOMAIN-CONTAINING PROTEIN"/>
    <property type="match status" value="1"/>
</dbReference>
<dbReference type="PANTHER" id="PTHR33284:SF1">
    <property type="entry name" value="RIBOSOMAL PROTEIN L25_GLN-TRNA SYNTHETASE, ANTI-CODON-BINDING DOMAIN-CONTAINING PROTEIN"/>
    <property type="match status" value="1"/>
</dbReference>
<dbReference type="Pfam" id="PF01386">
    <property type="entry name" value="Ribosomal_L25p"/>
    <property type="match status" value="1"/>
</dbReference>
<dbReference type="Pfam" id="PF14693">
    <property type="entry name" value="Ribosomal_TL5_C"/>
    <property type="match status" value="1"/>
</dbReference>
<dbReference type="SUPFAM" id="SSF50715">
    <property type="entry name" value="Ribosomal protein L25-like"/>
    <property type="match status" value="1"/>
</dbReference>
<evidence type="ECO:0000255" key="1">
    <source>
        <dbReference type="HAMAP-Rule" id="MF_01334"/>
    </source>
</evidence>
<evidence type="ECO:0000305" key="2"/>
<proteinExistence type="inferred from homology"/>
<reference key="1">
    <citation type="journal article" date="2010" name="Genome Biol. Evol.">
        <title>Continuing evolution of Burkholderia mallei through genome reduction and large-scale rearrangements.</title>
        <authorList>
            <person name="Losada L."/>
            <person name="Ronning C.M."/>
            <person name="DeShazer D."/>
            <person name="Woods D."/>
            <person name="Fedorova N."/>
            <person name="Kim H.S."/>
            <person name="Shabalina S.A."/>
            <person name="Pearson T.R."/>
            <person name="Brinkac L."/>
            <person name="Tan P."/>
            <person name="Nandi T."/>
            <person name="Crabtree J."/>
            <person name="Badger J."/>
            <person name="Beckstrom-Sternberg S."/>
            <person name="Saqib M."/>
            <person name="Schutzer S.E."/>
            <person name="Keim P."/>
            <person name="Nierman W.C."/>
        </authorList>
    </citation>
    <scope>NUCLEOTIDE SEQUENCE [LARGE SCALE GENOMIC DNA]</scope>
    <source>
        <strain>668</strain>
    </source>
</reference>
<keyword id="KW-0687">Ribonucleoprotein</keyword>
<keyword id="KW-0689">Ribosomal protein</keyword>
<keyword id="KW-0694">RNA-binding</keyword>
<keyword id="KW-0699">rRNA-binding</keyword>
<gene>
    <name evidence="1" type="primary">rplY</name>
    <name evidence="1" type="synonym">ctc</name>
    <name type="ordered locus">BURPS668_0568</name>
</gene>
<organism>
    <name type="scientific">Burkholderia pseudomallei (strain 668)</name>
    <dbReference type="NCBI Taxonomy" id="320373"/>
    <lineage>
        <taxon>Bacteria</taxon>
        <taxon>Pseudomonadati</taxon>
        <taxon>Pseudomonadota</taxon>
        <taxon>Betaproteobacteria</taxon>
        <taxon>Burkholderiales</taxon>
        <taxon>Burkholderiaceae</taxon>
        <taxon>Burkholderia</taxon>
        <taxon>pseudomallei group</taxon>
    </lineage>
</organism>
<comment type="function">
    <text evidence="1">This is one of the proteins that binds to the 5S RNA in the ribosome where it forms part of the central protuberance.</text>
</comment>
<comment type="subunit">
    <text evidence="1">Part of the 50S ribosomal subunit; part of the 5S rRNA/L5/L18/L25 subcomplex. Contacts the 5S rRNA. Binds to the 5S rRNA independently of L5 and L18.</text>
</comment>
<comment type="similarity">
    <text evidence="1">Belongs to the bacterial ribosomal protein bL25 family. CTC subfamily.</text>
</comment>